<evidence type="ECO:0000250" key="1"/>
<evidence type="ECO:0000250" key="2">
    <source>
        <dbReference type="UniProtKB" id="P06401"/>
    </source>
</evidence>
<evidence type="ECO:0000250" key="3">
    <source>
        <dbReference type="UniProtKB" id="Q00175"/>
    </source>
</evidence>
<evidence type="ECO:0000255" key="4"/>
<evidence type="ECO:0000255" key="5">
    <source>
        <dbReference type="PROSITE-ProRule" id="PRU00407"/>
    </source>
</evidence>
<evidence type="ECO:0000255" key="6">
    <source>
        <dbReference type="PROSITE-ProRule" id="PRU01189"/>
    </source>
</evidence>
<evidence type="ECO:0000256" key="7">
    <source>
        <dbReference type="SAM" id="MobiDB-lite"/>
    </source>
</evidence>
<evidence type="ECO:0000305" key="8"/>
<organism>
    <name type="scientific">Sapajus apella</name>
    <name type="common">Brown-capped capuchin</name>
    <name type="synonym">Cebus apella</name>
    <dbReference type="NCBI Taxonomy" id="9515"/>
    <lineage>
        <taxon>Eukaryota</taxon>
        <taxon>Metazoa</taxon>
        <taxon>Chordata</taxon>
        <taxon>Craniata</taxon>
        <taxon>Vertebrata</taxon>
        <taxon>Euteleostomi</taxon>
        <taxon>Mammalia</taxon>
        <taxon>Eutheria</taxon>
        <taxon>Euarchontoglires</taxon>
        <taxon>Primates</taxon>
        <taxon>Haplorrhini</taxon>
        <taxon>Platyrrhini</taxon>
        <taxon>Cebidae</taxon>
        <taxon>Cebinae</taxon>
        <taxon>Sapajus</taxon>
    </lineage>
</organism>
<comment type="function">
    <text evidence="2">The steroid hormones and their receptors are involved in the regulation of eukaryotic gene expression and affect cellular proliferation and differentiation in target tissues. Transcriptional activator of several progesteron-dependent promoters in a variety of cell types. Involved in activation of SRC-dependent MAPK signaling on hormone stimulation.</text>
</comment>
<comment type="subunit">
    <text evidence="2 3">Interacts with SMARD1 and UNC45A. Interacts with CUEDC2; the interaction promotes ubiquitination, decreases sumoylation, and represses transcriptional activity. Interacts with PIAS3; the interaction promotes sumoylation of PR in a hormone-dependent manner, inhibits DNA-binding, and alters nuclear export. Interacts with SP1; the interaction requires ligand-induced phosphorylation on Ser-345 by ERK1/2-MAPK. Interacts with PRMT2. Interacts with NCOA2 and NCOA1. Interacts with KLF9. Interacts with GTF2B (By similarity).</text>
</comment>
<comment type="subcellular location">
    <subcellularLocation>
        <location>Nucleus</location>
    </subcellularLocation>
    <subcellularLocation>
        <location>Cytoplasm</location>
    </subcellularLocation>
    <text evidence="1">Nucleoplasmic shuttling is both hormone- and cell cycle-dependent. On hormone stimulation, retained in the cytoplasm in the G(1) and G(2)/M phases (By similarity).</text>
</comment>
<comment type="domain">
    <text>Composed of three domains: a modulating N-terminal domain, a DNA-binding domain and a C-terminal ligand-binding domain.</text>
</comment>
<comment type="PTM">
    <text evidence="1">Phosphorylated on multiple serine sites. Several of these sites are hormone-dependent. Phosphorylation on Ser-294 is highly hormone-dependent and modulates ubiquitination and sumoylation on Lys-388. Phosphorylation on Ser-345 also requires induction by hormone. Basal phosphorylation on Ser-81, Ser-162, Ser-190 and Ser-400 is increased in response to progesterone and can be phosphorylated in vitro by the CDK2-A1 complex. Increased levels of phosphorylation on Ser-400 also in the presence of EGF, heregulin, IGF, PMA and FBS. Phosphorylation at this site by CDK2 is ligand-independent, and increases nuclear translocation and transcriptional activity. Phosphorylation at Ser-162 and Ser-294, but not at Ser-190, is impaired during the G(2)/M phase of the cell cycle. Phosphorylation on Ser-345 by ERK1/2 MAPK is required for interaction with SP1 (By similarity).</text>
</comment>
<comment type="PTM">
    <text evidence="1">Sumoylation is hormone-dependent and represses transcriptional activity. Sumoylation on all three sites is enhanced by PIAS3. Desumoylated by SENP1. Sumoylation on Lys-388, the main site of sumoylation, is repressed by ubiquitination on the same site, and modulated by phosphorylation at Ser-294 (By similarity).</text>
</comment>
<comment type="PTM">
    <text evidence="2">Ubiquitination is hormone-dependent and represses sumoylation on the same site (By similarity). Promoted by MAPK-mediated phosphorylation on Ser-294 (By similarity). Ubiquitinated by UBR5, leading to its degradation: UBR5 specifically recognizes and binds ligand-bound PGR when it is not associated with coactivators (NCOAs) (By similarity). In presence of NCOAs, the UBR5-degron is not accessible, preventing its ubiquitination and degradation (By similarity).</text>
</comment>
<comment type="PTM">
    <text evidence="1">Palmitoylated by ZDHHC7 and ZDHHC21. Palmitoylation is required for plasma membrane targeting and for rapid intracellular signaling via ERK and AKT kinases and cAMP generation (By similarity).</text>
</comment>
<comment type="similarity">
    <text evidence="8">Belongs to the nuclear hormone receptor family.</text>
</comment>
<name>PRGR_SAPAP</name>
<keyword id="KW-0963">Cytoplasm</keyword>
<keyword id="KW-0238">DNA-binding</keyword>
<keyword id="KW-1017">Isopeptide bond</keyword>
<keyword id="KW-0446">Lipid-binding</keyword>
<keyword id="KW-0449">Lipoprotein</keyword>
<keyword id="KW-0479">Metal-binding</keyword>
<keyword id="KW-0539">Nucleus</keyword>
<keyword id="KW-0564">Palmitate</keyword>
<keyword id="KW-0597">Phosphoprotein</keyword>
<keyword id="KW-0675">Receptor</keyword>
<keyword id="KW-1185">Reference proteome</keyword>
<keyword id="KW-0754">Steroid-binding</keyword>
<keyword id="KW-0804">Transcription</keyword>
<keyword id="KW-0805">Transcription regulation</keyword>
<keyword id="KW-0832">Ubl conjugation</keyword>
<keyword id="KW-0862">Zinc</keyword>
<keyword id="KW-0863">Zinc-finger</keyword>
<accession>A7XW16</accession>
<proteinExistence type="inferred from homology"/>
<reference key="1">
    <citation type="journal article" date="2008" name="Mol. Phylogenet. Evol.">
        <title>The human progesterone receptor shows evidence of adaptive evolution associated with its ability to act as a transcription factor.</title>
        <authorList>
            <person name="Chen C."/>
            <person name="Opazo J.C."/>
            <person name="Erez O."/>
            <person name="Uddin M."/>
            <person name="Santolaya-Forgas J."/>
            <person name="Goodman M."/>
            <person name="Grossman L.I."/>
            <person name="Romero R."/>
            <person name="Wildman D.E."/>
        </authorList>
    </citation>
    <scope>NUCLEOTIDE SEQUENCE [GENOMIC DNA]</scope>
</reference>
<protein>
    <recommendedName>
        <fullName>Progesterone receptor</fullName>
        <shortName>PR</shortName>
    </recommendedName>
    <alternativeName>
        <fullName>Nuclear receptor subfamily 3 group C member 3</fullName>
    </alternativeName>
</protein>
<gene>
    <name type="primary">PGR</name>
    <name type="synonym">NR3C3</name>
</gene>
<dbReference type="EMBL" id="DQ485133">
    <property type="protein sequence ID" value="ABE73084.1"/>
    <property type="molecule type" value="Genomic_DNA"/>
</dbReference>
<dbReference type="SMR" id="A7XW16"/>
<dbReference type="Proteomes" id="UP000504640">
    <property type="component" value="Unplaced"/>
</dbReference>
<dbReference type="GO" id="GO:0005737">
    <property type="term" value="C:cytoplasm"/>
    <property type="evidence" value="ECO:0007669"/>
    <property type="project" value="UniProtKB-SubCell"/>
</dbReference>
<dbReference type="GO" id="GO:0005654">
    <property type="term" value="C:nucleoplasm"/>
    <property type="evidence" value="ECO:0007669"/>
    <property type="project" value="UniProtKB-ARBA"/>
</dbReference>
<dbReference type="GO" id="GO:0003707">
    <property type="term" value="F:nuclear steroid receptor activity"/>
    <property type="evidence" value="ECO:0007669"/>
    <property type="project" value="InterPro"/>
</dbReference>
<dbReference type="GO" id="GO:0043565">
    <property type="term" value="F:sequence-specific DNA binding"/>
    <property type="evidence" value="ECO:0007669"/>
    <property type="project" value="InterPro"/>
</dbReference>
<dbReference type="GO" id="GO:0005496">
    <property type="term" value="F:steroid binding"/>
    <property type="evidence" value="ECO:0007669"/>
    <property type="project" value="UniProtKB-KW"/>
</dbReference>
<dbReference type="GO" id="GO:0008270">
    <property type="term" value="F:zinc ion binding"/>
    <property type="evidence" value="ECO:0007669"/>
    <property type="project" value="UniProtKB-KW"/>
</dbReference>
<dbReference type="CDD" id="cd07172">
    <property type="entry name" value="NR_DBD_GR_PR"/>
    <property type="match status" value="1"/>
</dbReference>
<dbReference type="CDD" id="cd07074">
    <property type="entry name" value="NR_LBD_PR"/>
    <property type="match status" value="1"/>
</dbReference>
<dbReference type="FunFam" id="1.10.565.10:FF:000004">
    <property type="entry name" value="Androgen receptor variant"/>
    <property type="match status" value="1"/>
</dbReference>
<dbReference type="FunFam" id="3.30.50.10:FF:000027">
    <property type="entry name" value="Progesterone receptor"/>
    <property type="match status" value="1"/>
</dbReference>
<dbReference type="Gene3D" id="3.30.50.10">
    <property type="entry name" value="Erythroid Transcription Factor GATA-1, subunit A"/>
    <property type="match status" value="1"/>
</dbReference>
<dbReference type="Gene3D" id="1.10.565.10">
    <property type="entry name" value="Retinoid X Receptor"/>
    <property type="match status" value="1"/>
</dbReference>
<dbReference type="InterPro" id="IPR035500">
    <property type="entry name" value="NHR-like_dom_sf"/>
</dbReference>
<dbReference type="InterPro" id="IPR000536">
    <property type="entry name" value="Nucl_hrmn_rcpt_lig-bd"/>
</dbReference>
<dbReference type="InterPro" id="IPR050200">
    <property type="entry name" value="Nuclear_hormone_rcpt_NR3"/>
</dbReference>
<dbReference type="InterPro" id="IPR001723">
    <property type="entry name" value="Nuclear_hrmn_rcpt"/>
</dbReference>
<dbReference type="InterPro" id="IPR000128">
    <property type="entry name" value="Progest_rcpt"/>
</dbReference>
<dbReference type="InterPro" id="IPR001628">
    <property type="entry name" value="Znf_hrmn_rcpt"/>
</dbReference>
<dbReference type="InterPro" id="IPR013088">
    <property type="entry name" value="Znf_NHR/GATA"/>
</dbReference>
<dbReference type="PANTHER" id="PTHR48092">
    <property type="entry name" value="KNIRPS-RELATED PROTEIN-RELATED"/>
    <property type="match status" value="1"/>
</dbReference>
<dbReference type="Pfam" id="PF00104">
    <property type="entry name" value="Hormone_recep"/>
    <property type="match status" value="1"/>
</dbReference>
<dbReference type="Pfam" id="PF02161">
    <property type="entry name" value="Prog_receptor"/>
    <property type="match status" value="1"/>
</dbReference>
<dbReference type="Pfam" id="PF00105">
    <property type="entry name" value="zf-C4"/>
    <property type="match status" value="1"/>
</dbReference>
<dbReference type="PRINTS" id="PR00544">
    <property type="entry name" value="PROGESTRONER"/>
</dbReference>
<dbReference type="PRINTS" id="PR00398">
    <property type="entry name" value="STRDHORMONER"/>
</dbReference>
<dbReference type="PRINTS" id="PR00047">
    <property type="entry name" value="STROIDFINGER"/>
</dbReference>
<dbReference type="SMART" id="SM00430">
    <property type="entry name" value="HOLI"/>
    <property type="match status" value="1"/>
</dbReference>
<dbReference type="SMART" id="SM00399">
    <property type="entry name" value="ZnF_C4"/>
    <property type="match status" value="1"/>
</dbReference>
<dbReference type="SUPFAM" id="SSF57716">
    <property type="entry name" value="Glucocorticoid receptor-like (DNA-binding domain)"/>
    <property type="match status" value="1"/>
</dbReference>
<dbReference type="SUPFAM" id="SSF48508">
    <property type="entry name" value="Nuclear receptor ligand-binding domain"/>
    <property type="match status" value="1"/>
</dbReference>
<dbReference type="PROSITE" id="PS51843">
    <property type="entry name" value="NR_LBD"/>
    <property type="match status" value="1"/>
</dbReference>
<dbReference type="PROSITE" id="PS00031">
    <property type="entry name" value="NUCLEAR_REC_DBD_1"/>
    <property type="match status" value="1"/>
</dbReference>
<dbReference type="PROSITE" id="PS51030">
    <property type="entry name" value="NUCLEAR_REC_DBD_2"/>
    <property type="match status" value="1"/>
</dbReference>
<sequence>MTELKAKGLRAPHVAGSPSSPKVGSPLPCRQATGQFPGSQTSDTLPEVSALPISLDGLLFPRICQAQDPPDEKTQDQQSLSDVEGAYSRVEATRGAGGSSSRPPEKDSGLLDSVLDTLWAPSGPGQSQPSPPACEVTSSWCLFGPELPEDPPAAPATQRVLSPLMSRSGGKAGDSSGMAAAHKVLPRGLSPSRQLLLPTSGSPHWSGAPVKPSPQPAAVEVEEEDGSESEDSAGLLLKGKPRALGGAAAGGGAPAVTPGTAAGGIALVPKEDSRFSAPRVALVEQDAPMAPGRSPLATTVTDFIHVPILPLSHALLAARTRQLLEDESYDGGSGAASAFAPPRSSPSASSTPVPGSDFPDCAYAPDAEPKDDVYPLYGDFQPPALKIKEEEEGAEASTRSPRSYLVAGASPTTFPDFPLGPPPPLPPRAPPSRPGEAAVTAAPASASVSSASSSGSTLECILYKAEGAQPQQGPFAPPPCKAPGAGGCLLPRDSLPSTSASAGATAAGAAPALYPALGLNGLPQLGYQAAVIKEGLPQVYPPYLNYLRPDSETSQSPQYSFESLPQKICLICGDEASGCHYGVLTCGSCKVFFKRAMEGQHNYLCAGRNDCIVDKIRRKNCPACRLRKCCQAGMVLGGRKFKKFNKVRVMRALDAVALPQPVGIPNENQALSQRFTFSPSQDIQLIPPLINLLLSIEPDVIYAGHDNTKPDTSSSLLTSLNQLGERQLLSVVKWSKSLPGFRNLHIDDQITLIQYSWMSLMVFGLGWRSYKHVSGQMLYFAPDLILNEQRMKESSFYSLCLTMWQIPQEFVKLQVSQEEFLCMKVLLLLNTIPLEGLRSQTQFEEMRSSYIRELIKAIGLRQKGVVSSSQRFYQLTKLLDNLHDLVKQLHLYCLNTFIQSRALSVEFPEMMSEVIAAQLPKILAGMVKPLLFHKK</sequence>
<feature type="chain" id="PRO_0000375851" description="Progesterone receptor">
    <location>
        <begin position="1"/>
        <end position="935"/>
    </location>
</feature>
<feature type="domain" description="NR LBD" evidence="6">
    <location>
        <begin position="681"/>
        <end position="915"/>
    </location>
</feature>
<feature type="DNA-binding region" description="Nuclear receptor" evidence="5">
    <location>
        <begin position="569"/>
        <end position="641"/>
    </location>
</feature>
<feature type="zinc finger region" description="NR C4-type" evidence="5">
    <location>
        <begin position="569"/>
        <end position="589"/>
    </location>
</feature>
<feature type="zinc finger region" description="NR C4-type" evidence="5">
    <location>
        <begin position="605"/>
        <end position="629"/>
    </location>
</feature>
<feature type="region of interest" description="Modulating, Pro-Rich">
    <location>
        <begin position="1"/>
        <end position="568"/>
    </location>
</feature>
<feature type="region of interest" description="AF3; mediates transcriptional activation" evidence="2">
    <location>
        <begin position="1"/>
        <end position="164"/>
    </location>
</feature>
<feature type="region of interest" description="Disordered" evidence="7">
    <location>
        <begin position="1"/>
        <end position="49"/>
    </location>
</feature>
<feature type="region of interest" description="Disordered" evidence="7">
    <location>
        <begin position="62"/>
        <end position="158"/>
    </location>
</feature>
<feature type="region of interest" description="Mediates transcriptional transrepression" evidence="2">
    <location>
        <begin position="165"/>
        <end position="305"/>
    </location>
</feature>
<feature type="region of interest" description="Disordered" evidence="7">
    <location>
        <begin position="187"/>
        <end position="233"/>
    </location>
</feature>
<feature type="region of interest" description="Disordered" evidence="7">
    <location>
        <begin position="328"/>
        <end position="365"/>
    </location>
</feature>
<feature type="region of interest" description="Disordered" evidence="7">
    <location>
        <begin position="390"/>
        <end position="452"/>
    </location>
</feature>
<feature type="region of interest" description="AF1; mediates transcriptional activation" evidence="2">
    <location>
        <begin position="456"/>
        <end position="548"/>
    </location>
</feature>
<feature type="region of interest" description="AF2; mediates transcriptional activation" evidence="2">
    <location>
        <begin position="689"/>
        <end position="935"/>
    </location>
</feature>
<feature type="short sequence motif" description="LXXL motif 1" evidence="2">
    <location>
        <begin position="55"/>
        <end position="59"/>
    </location>
</feature>
<feature type="short sequence motif" description="LXXL motif 2" evidence="2">
    <location>
        <begin position="115"/>
        <end position="119"/>
    </location>
</feature>
<feature type="short sequence motif" description="Nuclear localization signal" evidence="4">
    <location>
        <begin position="183"/>
        <end position="187"/>
    </location>
</feature>
<feature type="compositionally biased region" description="Polar residues" evidence="7">
    <location>
        <begin position="32"/>
        <end position="44"/>
    </location>
</feature>
<feature type="compositionally biased region" description="Polar residues" evidence="7">
    <location>
        <begin position="191"/>
        <end position="203"/>
    </location>
</feature>
<feature type="compositionally biased region" description="Acidic residues" evidence="7">
    <location>
        <begin position="220"/>
        <end position="231"/>
    </location>
</feature>
<feature type="compositionally biased region" description="Low complexity" evidence="7">
    <location>
        <begin position="335"/>
        <end position="356"/>
    </location>
</feature>
<feature type="compositionally biased region" description="Pro residues" evidence="7">
    <location>
        <begin position="418"/>
        <end position="433"/>
    </location>
</feature>
<feature type="compositionally biased region" description="Low complexity" evidence="7">
    <location>
        <begin position="434"/>
        <end position="452"/>
    </location>
</feature>
<feature type="binding site" evidence="2">
    <location>
        <position position="768"/>
    </location>
    <ligand>
        <name>progesterone</name>
        <dbReference type="ChEBI" id="CHEBI:17026"/>
    </ligand>
</feature>
<feature type="modified residue" description="Phosphoserine" evidence="2">
    <location>
        <position position="20"/>
    </location>
</feature>
<feature type="modified residue" description="Phosphoserine" evidence="2">
    <location>
        <position position="81"/>
    </location>
</feature>
<feature type="modified residue" description="Phosphoserine" evidence="2">
    <location>
        <position position="130"/>
    </location>
</feature>
<feature type="modified residue" description="Phosphoserine" evidence="2">
    <location>
        <position position="162"/>
    </location>
</feature>
<feature type="modified residue" description="Phosphoserine" evidence="2">
    <location>
        <position position="190"/>
    </location>
</feature>
<feature type="modified residue" description="Phosphoserine" evidence="2">
    <location>
        <position position="213"/>
    </location>
</feature>
<feature type="modified residue" description="Phosphoserine; by MAPK1" evidence="2">
    <location>
        <position position="294"/>
    </location>
</feature>
<feature type="modified residue" description="Phosphoserine; by MAPK" evidence="2">
    <location>
        <position position="345"/>
    </location>
</feature>
<feature type="modified residue" description="Phosphoserine; by CDK2" evidence="2">
    <location>
        <position position="400"/>
    </location>
</feature>
<feature type="modified residue" description="Phosphoserine" evidence="2">
    <location>
        <position position="678"/>
    </location>
</feature>
<feature type="cross-link" description="Glycyl lysine isopeptide (Lys-Gly) (interchain with G-Cter in SUMO); alternate" evidence="1">
    <location>
        <position position="388"/>
    </location>
</feature>
<feature type="cross-link" description="Glycyl lysine isopeptide (Lys-Gly) (interchain with G-Cter in ubiquitin); alternate" evidence="2">
    <location>
        <position position="388"/>
    </location>
</feature>
<feature type="cross-link" description="Glycyl lysine isopeptide (Lys-Gly) (interchain with G-Cter in SUMO)" evidence="1">
    <location>
        <position position="533"/>
    </location>
</feature>